<gene>
    <name type="primary">UL101</name>
</gene>
<evidence type="ECO:0000256" key="1">
    <source>
        <dbReference type="SAM" id="MobiDB-lite"/>
    </source>
</evidence>
<organismHost>
    <name type="scientific">Homo sapiens</name>
    <name type="common">Human</name>
    <dbReference type="NCBI Taxonomy" id="9606"/>
</organismHost>
<organism>
    <name type="scientific">Human cytomegalovirus (strain AD169)</name>
    <name type="common">HHV-5</name>
    <name type="synonym">Human herpesvirus 5</name>
    <dbReference type="NCBI Taxonomy" id="10360"/>
    <lineage>
        <taxon>Viruses</taxon>
        <taxon>Duplodnaviria</taxon>
        <taxon>Heunggongvirae</taxon>
        <taxon>Peploviricota</taxon>
        <taxon>Herviviricetes</taxon>
        <taxon>Herpesvirales</taxon>
        <taxon>Orthoherpesviridae</taxon>
        <taxon>Betaherpesvirinae</taxon>
        <taxon>Cytomegalovirus</taxon>
        <taxon>Cytomegalovirus humanbeta5</taxon>
        <taxon>Human cytomegalovirus</taxon>
    </lineage>
</organism>
<protein>
    <recommendedName>
        <fullName>Uncharacterized protein UL101</fullName>
    </recommendedName>
</protein>
<proteinExistence type="predicted"/>
<reference key="1">
    <citation type="journal article" date="1990" name="Curr. Top. Microbiol. Immunol.">
        <title>Analysis of the protein-coding content of the sequence of human cytomegalovirus strain AD169.</title>
        <authorList>
            <person name="Chee M.S."/>
            <person name="Bankier A.T."/>
            <person name="Beck S."/>
            <person name="Bohni R."/>
            <person name="Brown C.M."/>
            <person name="Cerny R."/>
            <person name="Horsnell T."/>
            <person name="Hutchison C.A. III"/>
            <person name="Kouzarides T."/>
            <person name="Martignetti J.A."/>
            <person name="Preddie E."/>
            <person name="Satchwell S.C."/>
            <person name="Tomlinson P."/>
            <person name="Weston K.M."/>
            <person name="Barrell B.G."/>
        </authorList>
    </citation>
    <scope>NUCLEOTIDE SEQUENCE [LARGE SCALE GENOMIC DNA]</scope>
</reference>
<feature type="chain" id="PRO_0000115344" description="Uncharacterized protein UL101">
    <location>
        <begin position="1"/>
        <end position="115"/>
    </location>
</feature>
<feature type="region of interest" description="Disordered" evidence="1">
    <location>
        <begin position="1"/>
        <end position="86"/>
    </location>
</feature>
<accession>P16826</accession>
<dbReference type="EMBL" id="X17403">
    <property type="protein sequence ID" value="CAA35337.1"/>
    <property type="molecule type" value="Genomic_DNA"/>
</dbReference>
<dbReference type="PIR" id="S09866">
    <property type="entry name" value="S09866"/>
</dbReference>
<dbReference type="Proteomes" id="UP000008991">
    <property type="component" value="Segment"/>
</dbReference>
<sequence length="115" mass="12184">RRPARSGGDGGAPMTTGSRVVKYYDGSRRGSRRGLSTSGRSVKKDPAGLRDSLLSEDDRSAAAAPPPPPVHPVRDQLSSQLVRPSRGLGAYRTMSVFGSGWRPCRAAASHVRGAR</sequence>
<name>UL101_HCMVA</name>